<comment type="function">
    <text evidence="1">Binds 16S rRNA, required for the assembly of 30S particles and may also be responsible for determining the conformation of the 16S rRNA at the A site.</text>
</comment>
<comment type="subunit">
    <text evidence="1">Part of the 30S ribosomal subunit. Contacts proteins S3 and S10.</text>
</comment>
<comment type="similarity">
    <text evidence="1">Belongs to the universal ribosomal protein uS14 family.</text>
</comment>
<proteinExistence type="inferred from homology"/>
<accession>B3CN39</accession>
<evidence type="ECO:0000255" key="1">
    <source>
        <dbReference type="HAMAP-Rule" id="MF_00537"/>
    </source>
</evidence>
<evidence type="ECO:0000305" key="2"/>
<dbReference type="EMBL" id="AM999887">
    <property type="protein sequence ID" value="CAQ55287.1"/>
    <property type="molecule type" value="Genomic_DNA"/>
</dbReference>
<dbReference type="RefSeq" id="WP_007302545.1">
    <property type="nucleotide sequence ID" value="NC_010981.1"/>
</dbReference>
<dbReference type="SMR" id="B3CN39"/>
<dbReference type="KEGG" id="wpi:WP1179"/>
<dbReference type="eggNOG" id="COG0199">
    <property type="taxonomic scope" value="Bacteria"/>
</dbReference>
<dbReference type="HOGENOM" id="CLU_139869_0_0_5"/>
<dbReference type="Proteomes" id="UP000008814">
    <property type="component" value="Chromosome"/>
</dbReference>
<dbReference type="GO" id="GO:0005737">
    <property type="term" value="C:cytoplasm"/>
    <property type="evidence" value="ECO:0007669"/>
    <property type="project" value="UniProtKB-ARBA"/>
</dbReference>
<dbReference type="GO" id="GO:0015935">
    <property type="term" value="C:small ribosomal subunit"/>
    <property type="evidence" value="ECO:0007669"/>
    <property type="project" value="TreeGrafter"/>
</dbReference>
<dbReference type="GO" id="GO:0019843">
    <property type="term" value="F:rRNA binding"/>
    <property type="evidence" value="ECO:0007669"/>
    <property type="project" value="UniProtKB-UniRule"/>
</dbReference>
<dbReference type="GO" id="GO:0003735">
    <property type="term" value="F:structural constituent of ribosome"/>
    <property type="evidence" value="ECO:0007669"/>
    <property type="project" value="InterPro"/>
</dbReference>
<dbReference type="GO" id="GO:0006412">
    <property type="term" value="P:translation"/>
    <property type="evidence" value="ECO:0007669"/>
    <property type="project" value="UniProtKB-UniRule"/>
</dbReference>
<dbReference type="FunFam" id="1.10.287.1480:FF:000001">
    <property type="entry name" value="30S ribosomal protein S14"/>
    <property type="match status" value="1"/>
</dbReference>
<dbReference type="Gene3D" id="1.10.287.1480">
    <property type="match status" value="1"/>
</dbReference>
<dbReference type="HAMAP" id="MF_00537">
    <property type="entry name" value="Ribosomal_uS14_1"/>
    <property type="match status" value="1"/>
</dbReference>
<dbReference type="InterPro" id="IPR001209">
    <property type="entry name" value="Ribosomal_uS14"/>
</dbReference>
<dbReference type="InterPro" id="IPR023036">
    <property type="entry name" value="Ribosomal_uS14_bac/plastid"/>
</dbReference>
<dbReference type="InterPro" id="IPR018271">
    <property type="entry name" value="Ribosomal_uS14_CS"/>
</dbReference>
<dbReference type="NCBIfam" id="NF006477">
    <property type="entry name" value="PRK08881.1"/>
    <property type="match status" value="1"/>
</dbReference>
<dbReference type="PANTHER" id="PTHR19836">
    <property type="entry name" value="30S RIBOSOMAL PROTEIN S14"/>
    <property type="match status" value="1"/>
</dbReference>
<dbReference type="PANTHER" id="PTHR19836:SF19">
    <property type="entry name" value="SMALL RIBOSOMAL SUBUNIT PROTEIN US14M"/>
    <property type="match status" value="1"/>
</dbReference>
<dbReference type="Pfam" id="PF00253">
    <property type="entry name" value="Ribosomal_S14"/>
    <property type="match status" value="1"/>
</dbReference>
<dbReference type="SUPFAM" id="SSF57716">
    <property type="entry name" value="Glucocorticoid receptor-like (DNA-binding domain)"/>
    <property type="match status" value="1"/>
</dbReference>
<dbReference type="PROSITE" id="PS00527">
    <property type="entry name" value="RIBOSOMAL_S14"/>
    <property type="match status" value="1"/>
</dbReference>
<protein>
    <recommendedName>
        <fullName evidence="1">Small ribosomal subunit protein uS14</fullName>
    </recommendedName>
    <alternativeName>
        <fullName evidence="2">30S ribosomal protein S14</fullName>
    </alternativeName>
</protein>
<gene>
    <name evidence="1" type="primary">rpsN</name>
    <name type="ordered locus">WP1179</name>
</gene>
<name>RS14_WOLPP</name>
<sequence length="102" mass="11955">MAKKSMIQKNLRRIKLCDQYRERREELKSIMNNKDLSIAKRFAAQSKLIKKLPRDSSKIRIRNRCALTGRPRGVYRKFGLCRIVLRDLCSFGQVPGVTKSSW</sequence>
<keyword id="KW-0687">Ribonucleoprotein</keyword>
<keyword id="KW-0689">Ribosomal protein</keyword>
<keyword id="KW-0694">RNA-binding</keyword>
<keyword id="KW-0699">rRNA-binding</keyword>
<reference key="1">
    <citation type="journal article" date="2008" name="Mol. Biol. Evol.">
        <title>Genome evolution of Wolbachia strain wPip from the Culex pipiens group.</title>
        <authorList>
            <person name="Klasson L."/>
            <person name="Walker T."/>
            <person name="Sebaihia M."/>
            <person name="Sanders M.J."/>
            <person name="Quail M.A."/>
            <person name="Lord A."/>
            <person name="Sanders S."/>
            <person name="Earl J."/>
            <person name="O'Neill S.L."/>
            <person name="Thomson N."/>
            <person name="Sinkins S.P."/>
            <person name="Parkhill J."/>
        </authorList>
    </citation>
    <scope>NUCLEOTIDE SEQUENCE [LARGE SCALE GENOMIC DNA]</scope>
    <source>
        <strain>wPip</strain>
    </source>
</reference>
<organism>
    <name type="scientific">Wolbachia pipientis subsp. Culex pipiens (strain wPip)</name>
    <dbReference type="NCBI Taxonomy" id="570417"/>
    <lineage>
        <taxon>Bacteria</taxon>
        <taxon>Pseudomonadati</taxon>
        <taxon>Pseudomonadota</taxon>
        <taxon>Alphaproteobacteria</taxon>
        <taxon>Rickettsiales</taxon>
        <taxon>Anaplasmataceae</taxon>
        <taxon>Wolbachieae</taxon>
        <taxon>Wolbachia</taxon>
    </lineage>
</organism>
<feature type="chain" id="PRO_1000128636" description="Small ribosomal subunit protein uS14">
    <location>
        <begin position="1"/>
        <end position="102"/>
    </location>
</feature>